<name>HLGA_STAAR</name>
<gene>
    <name type="primary">hlgA</name>
    <name type="ordered locus">SAR2509</name>
</gene>
<evidence type="ECO:0000250" key="1"/>
<evidence type="ECO:0000305" key="2"/>
<proteinExistence type="inferred from homology"/>
<reference key="1">
    <citation type="journal article" date="2004" name="Proc. Natl. Acad. Sci. U.S.A.">
        <title>Complete genomes of two clinical Staphylococcus aureus strains: evidence for the rapid evolution of virulence and drug resistance.</title>
        <authorList>
            <person name="Holden M.T.G."/>
            <person name="Feil E.J."/>
            <person name="Lindsay J.A."/>
            <person name="Peacock S.J."/>
            <person name="Day N.P.J."/>
            <person name="Enright M.C."/>
            <person name="Foster T.J."/>
            <person name="Moore C.E."/>
            <person name="Hurst L."/>
            <person name="Atkin R."/>
            <person name="Barron A."/>
            <person name="Bason N."/>
            <person name="Bentley S.D."/>
            <person name="Chillingworth C."/>
            <person name="Chillingworth T."/>
            <person name="Churcher C."/>
            <person name="Clark L."/>
            <person name="Corton C."/>
            <person name="Cronin A."/>
            <person name="Doggett J."/>
            <person name="Dowd L."/>
            <person name="Feltwell T."/>
            <person name="Hance Z."/>
            <person name="Harris B."/>
            <person name="Hauser H."/>
            <person name="Holroyd S."/>
            <person name="Jagels K."/>
            <person name="James K.D."/>
            <person name="Lennard N."/>
            <person name="Line A."/>
            <person name="Mayes R."/>
            <person name="Moule S."/>
            <person name="Mungall K."/>
            <person name="Ormond D."/>
            <person name="Quail M.A."/>
            <person name="Rabbinowitsch E."/>
            <person name="Rutherford K.M."/>
            <person name="Sanders M."/>
            <person name="Sharp S."/>
            <person name="Simmonds M."/>
            <person name="Stevens K."/>
            <person name="Whitehead S."/>
            <person name="Barrell B.G."/>
            <person name="Spratt B.G."/>
            <person name="Parkhill J."/>
        </authorList>
    </citation>
    <scope>NUCLEOTIDE SEQUENCE [LARGE SCALE GENOMIC DNA]</scope>
    <source>
        <strain>MRSA252</strain>
    </source>
</reference>
<feature type="signal peptide" evidence="1">
    <location>
        <begin position="1"/>
        <end position="29"/>
    </location>
</feature>
<feature type="chain" id="PRO_0000045215" description="Gamma-hemolysin component A">
    <location>
        <begin position="30"/>
        <end position="309"/>
    </location>
</feature>
<organism>
    <name type="scientific">Staphylococcus aureus (strain MRSA252)</name>
    <dbReference type="NCBI Taxonomy" id="282458"/>
    <lineage>
        <taxon>Bacteria</taxon>
        <taxon>Bacillati</taxon>
        <taxon>Bacillota</taxon>
        <taxon>Bacilli</taxon>
        <taxon>Bacillales</taxon>
        <taxon>Staphylococcaceae</taxon>
        <taxon>Staphylococcus</taxon>
    </lineage>
</organism>
<protein>
    <recommendedName>
        <fullName>Gamma-hemolysin component A</fullName>
    </recommendedName>
    <alternativeName>
        <fullName>H-gamma-2</fullName>
    </alternativeName>
    <alternativeName>
        <fullName>H-gamma-II</fullName>
    </alternativeName>
</protein>
<sequence length="309" mass="34958">MIKNKILTATLAVGLIAPLANPFIEISKAENKIEDIGQGAEIIKRTQDITSKRLAITQNIQFDFVKDKKYNKDALVVKMQGFISSRTTYSDLKKYPYIKRMIWPFQYNISLKTKDSNVDLINYLPKNKIDSADVSQKLGYNIGGNFQSAPSIGGSGSFNYSKTISYNQKNYVTEVESQNSKGVKWGVKANSFVTPNGQVSAYDQYLFAQDPTGPAARDYFVPDNQLPPLIQSGFNPSFITTLSHEKGKGDKSEFEITYGRNMDTTYAYVTRHRLAVDRKHDAFKNRNVTVKYEVNWKTHEVKIKSITPK</sequence>
<comment type="function">
    <text evidence="1">Toxin that seems to act by forming pores in the membrane of the cell. Has a hemolytic and a leucotoxic activity (By similarity).</text>
</comment>
<comment type="subunit">
    <text evidence="1">Toxicity requires sequential binding and synergistic association of a class S and a class F component which form heterooligomeric complexes. HlgA (class S) associates with HlgB (class F) thus forming an AB toxin in strains producing both gamma-hemolysins and leukocidins. HlgA and LukF-PV can also form a complex (By similarity).</text>
</comment>
<comment type="subcellular location">
    <subcellularLocation>
        <location evidence="1">Secreted</location>
    </subcellularLocation>
</comment>
<comment type="similarity">
    <text evidence="2">Belongs to the aerolysin family.</text>
</comment>
<dbReference type="EMBL" id="BX571856">
    <property type="protein sequence ID" value="CAG41489.1"/>
    <property type="molecule type" value="Genomic_DNA"/>
</dbReference>
<dbReference type="RefSeq" id="WP_000594517.1">
    <property type="nucleotide sequence ID" value="NC_002952.2"/>
</dbReference>
<dbReference type="SMR" id="Q6GE14"/>
<dbReference type="KEGG" id="sar:SAR2509"/>
<dbReference type="HOGENOM" id="CLU_075311_0_0_9"/>
<dbReference type="Proteomes" id="UP000000596">
    <property type="component" value="Chromosome"/>
</dbReference>
<dbReference type="GO" id="GO:0005576">
    <property type="term" value="C:extracellular region"/>
    <property type="evidence" value="ECO:0007669"/>
    <property type="project" value="UniProtKB-SubCell"/>
</dbReference>
<dbReference type="GO" id="GO:0090729">
    <property type="term" value="F:toxin activity"/>
    <property type="evidence" value="ECO:0007669"/>
    <property type="project" value="UniProtKB-KW"/>
</dbReference>
<dbReference type="GO" id="GO:0051715">
    <property type="term" value="P:cytolysis in another organism"/>
    <property type="evidence" value="ECO:0007669"/>
    <property type="project" value="InterPro"/>
</dbReference>
<dbReference type="Gene3D" id="2.70.240.10">
    <property type="entry name" value="Leukocidin/porin MspA"/>
    <property type="match status" value="1"/>
</dbReference>
<dbReference type="InterPro" id="IPR003963">
    <property type="entry name" value="Bi-component_toxin_staph"/>
</dbReference>
<dbReference type="InterPro" id="IPR016183">
    <property type="entry name" value="Leukocidin/Hemolysin_toxin"/>
</dbReference>
<dbReference type="InterPro" id="IPR036435">
    <property type="entry name" value="Leukocidin/porin_MspA_sf"/>
</dbReference>
<dbReference type="NCBIfam" id="TIGR01002">
    <property type="entry name" value="hlyII"/>
    <property type="match status" value="1"/>
</dbReference>
<dbReference type="Pfam" id="PF07968">
    <property type="entry name" value="Leukocidin"/>
    <property type="match status" value="1"/>
</dbReference>
<dbReference type="PRINTS" id="PR01468">
    <property type="entry name" value="BICOMPNTOXIN"/>
</dbReference>
<dbReference type="SUPFAM" id="SSF56959">
    <property type="entry name" value="Leukocidin-like"/>
    <property type="match status" value="1"/>
</dbReference>
<accession>Q6GE14</accession>
<keyword id="KW-0204">Cytolysis</keyword>
<keyword id="KW-0354">Hemolysis</keyword>
<keyword id="KW-0964">Secreted</keyword>
<keyword id="KW-0732">Signal</keyword>
<keyword id="KW-0800">Toxin</keyword>
<keyword id="KW-0843">Virulence</keyword>